<dbReference type="EC" id="1.7.1.13" evidence="1"/>
<dbReference type="EMBL" id="CP000560">
    <property type="protein sequence ID" value="ABS73715.1"/>
    <property type="molecule type" value="Genomic_DNA"/>
</dbReference>
<dbReference type="RefSeq" id="WP_003154673.1">
    <property type="nucleotide sequence ID" value="NC_009725.2"/>
</dbReference>
<dbReference type="SMR" id="A7Z3Y9"/>
<dbReference type="GeneID" id="93080487"/>
<dbReference type="KEGG" id="bay:RBAM_013520"/>
<dbReference type="HOGENOM" id="CLU_102489_0_1_9"/>
<dbReference type="UniPathway" id="UPA00392"/>
<dbReference type="Proteomes" id="UP000001120">
    <property type="component" value="Chromosome"/>
</dbReference>
<dbReference type="GO" id="GO:0005737">
    <property type="term" value="C:cytoplasm"/>
    <property type="evidence" value="ECO:0007669"/>
    <property type="project" value="UniProtKB-SubCell"/>
</dbReference>
<dbReference type="GO" id="GO:0033739">
    <property type="term" value="F:preQ1 synthase activity"/>
    <property type="evidence" value="ECO:0007669"/>
    <property type="project" value="UniProtKB-UniRule"/>
</dbReference>
<dbReference type="GO" id="GO:0008616">
    <property type="term" value="P:queuosine biosynthetic process"/>
    <property type="evidence" value="ECO:0007669"/>
    <property type="project" value="UniProtKB-UniRule"/>
</dbReference>
<dbReference type="GO" id="GO:0006400">
    <property type="term" value="P:tRNA modification"/>
    <property type="evidence" value="ECO:0007669"/>
    <property type="project" value="UniProtKB-UniRule"/>
</dbReference>
<dbReference type="Gene3D" id="3.30.1130.10">
    <property type="match status" value="1"/>
</dbReference>
<dbReference type="HAMAP" id="MF_00818">
    <property type="entry name" value="QueF_type1"/>
    <property type="match status" value="1"/>
</dbReference>
<dbReference type="InterPro" id="IPR043133">
    <property type="entry name" value="GTP-CH-I_C/QueF"/>
</dbReference>
<dbReference type="InterPro" id="IPR050084">
    <property type="entry name" value="NADPH_dep_7-cyano-7-deazaG_red"/>
</dbReference>
<dbReference type="InterPro" id="IPR029500">
    <property type="entry name" value="QueF"/>
</dbReference>
<dbReference type="InterPro" id="IPR016856">
    <property type="entry name" value="QueF_type1"/>
</dbReference>
<dbReference type="NCBIfam" id="TIGR03139">
    <property type="entry name" value="QueF-II"/>
    <property type="match status" value="1"/>
</dbReference>
<dbReference type="PANTHER" id="PTHR34354">
    <property type="entry name" value="NADPH-DEPENDENT 7-CYANO-7-DEAZAGUANINE REDUCTASE"/>
    <property type="match status" value="1"/>
</dbReference>
<dbReference type="PANTHER" id="PTHR34354:SF1">
    <property type="entry name" value="NADPH-DEPENDENT 7-CYANO-7-DEAZAGUANINE REDUCTASE"/>
    <property type="match status" value="1"/>
</dbReference>
<dbReference type="Pfam" id="PF14489">
    <property type="entry name" value="QueF"/>
    <property type="match status" value="1"/>
</dbReference>
<dbReference type="PIRSF" id="PIRSF027377">
    <property type="entry name" value="Nitrile_oxidored_QueF"/>
    <property type="match status" value="1"/>
</dbReference>
<dbReference type="SUPFAM" id="SSF55620">
    <property type="entry name" value="Tetrahydrobiopterin biosynthesis enzymes-like"/>
    <property type="match status" value="1"/>
</dbReference>
<accession>A7Z3Y9</accession>
<keyword id="KW-0963">Cytoplasm</keyword>
<keyword id="KW-0521">NADP</keyword>
<keyword id="KW-0560">Oxidoreductase</keyword>
<keyword id="KW-0671">Queuosine biosynthesis</keyword>
<reference key="1">
    <citation type="journal article" date="2007" name="Nat. Biotechnol.">
        <title>Comparative analysis of the complete genome sequence of the plant growth-promoting bacterium Bacillus amyloliquefaciens FZB42.</title>
        <authorList>
            <person name="Chen X.H."/>
            <person name="Koumoutsi A."/>
            <person name="Scholz R."/>
            <person name="Eisenreich A."/>
            <person name="Schneider K."/>
            <person name="Heinemeyer I."/>
            <person name="Morgenstern B."/>
            <person name="Voss B."/>
            <person name="Hess W.R."/>
            <person name="Reva O."/>
            <person name="Junge H."/>
            <person name="Voigt B."/>
            <person name="Jungblut P.R."/>
            <person name="Vater J."/>
            <person name="Suessmuth R."/>
            <person name="Liesegang H."/>
            <person name="Strittmatter A."/>
            <person name="Gottschalk G."/>
            <person name="Borriss R."/>
        </authorList>
    </citation>
    <scope>NUCLEOTIDE SEQUENCE [LARGE SCALE GENOMIC DNA]</scope>
    <source>
        <strain>DSM 23117 / BGSC 10A6 / LMG 26770 / FZB42</strain>
    </source>
</reference>
<sequence>MTRKESELEGVTLLGNQGTNYLFEYAPEVLESFPNKHVNRDYFVKFNCPEFTSLCPKTGQPDFATIYISYIPDEKMVESKSLKLYLFSFRNHGDFHEDCMNIIMNDLIELMDPRYIEVWGKFTPRGGISIDPYTNYGRPGTKYEKMAEHRMMNHDMYPETIDNR</sequence>
<feature type="chain" id="PRO_1000134291" description="NADPH-dependent 7-cyano-7-deazaguanine reductase">
    <location>
        <begin position="1"/>
        <end position="164"/>
    </location>
</feature>
<feature type="active site" description="Thioimide intermediate" evidence="1">
    <location>
        <position position="55"/>
    </location>
</feature>
<feature type="active site" description="Proton donor" evidence="1">
    <location>
        <position position="62"/>
    </location>
</feature>
<feature type="binding site" evidence="1">
    <location>
        <begin position="77"/>
        <end position="79"/>
    </location>
    <ligand>
        <name>substrate</name>
    </ligand>
</feature>
<feature type="binding site" evidence="1">
    <location>
        <begin position="96"/>
        <end position="97"/>
    </location>
    <ligand>
        <name>substrate</name>
    </ligand>
</feature>
<evidence type="ECO:0000255" key="1">
    <source>
        <dbReference type="HAMAP-Rule" id="MF_00818"/>
    </source>
</evidence>
<gene>
    <name evidence="1" type="primary">queF</name>
    <name type="ordered locus">RBAM_013520</name>
</gene>
<name>QUEF_BACVZ</name>
<proteinExistence type="inferred from homology"/>
<organism>
    <name type="scientific">Bacillus velezensis (strain DSM 23117 / BGSC 10A6 / LMG 26770 / FZB42)</name>
    <name type="common">Bacillus amyloliquefaciens subsp. plantarum</name>
    <dbReference type="NCBI Taxonomy" id="326423"/>
    <lineage>
        <taxon>Bacteria</taxon>
        <taxon>Bacillati</taxon>
        <taxon>Bacillota</taxon>
        <taxon>Bacilli</taxon>
        <taxon>Bacillales</taxon>
        <taxon>Bacillaceae</taxon>
        <taxon>Bacillus</taxon>
        <taxon>Bacillus amyloliquefaciens group</taxon>
    </lineage>
</organism>
<comment type="function">
    <text evidence="1">Catalyzes the NADPH-dependent reduction of 7-cyano-7-deazaguanine (preQ0) to 7-aminomethyl-7-deazaguanine (preQ1).</text>
</comment>
<comment type="catalytic activity">
    <reaction evidence="1">
        <text>7-aminomethyl-7-carbaguanine + 2 NADP(+) = 7-cyano-7-deazaguanine + 2 NADPH + 3 H(+)</text>
        <dbReference type="Rhea" id="RHEA:13409"/>
        <dbReference type="ChEBI" id="CHEBI:15378"/>
        <dbReference type="ChEBI" id="CHEBI:45075"/>
        <dbReference type="ChEBI" id="CHEBI:57783"/>
        <dbReference type="ChEBI" id="CHEBI:58349"/>
        <dbReference type="ChEBI" id="CHEBI:58703"/>
        <dbReference type="EC" id="1.7.1.13"/>
    </reaction>
</comment>
<comment type="pathway">
    <text evidence="1">tRNA modification; tRNA-queuosine biosynthesis.</text>
</comment>
<comment type="subcellular location">
    <subcellularLocation>
        <location evidence="1">Cytoplasm</location>
    </subcellularLocation>
</comment>
<comment type="similarity">
    <text evidence="1">Belongs to the GTP cyclohydrolase I family. QueF type 1 subfamily.</text>
</comment>
<protein>
    <recommendedName>
        <fullName evidence="1">NADPH-dependent 7-cyano-7-deazaguanine reductase</fullName>
        <ecNumber evidence="1">1.7.1.13</ecNumber>
    </recommendedName>
    <alternativeName>
        <fullName evidence="1">7-cyano-7-carbaguanine reductase</fullName>
    </alternativeName>
    <alternativeName>
        <fullName evidence="1">NADPH-dependent nitrile oxidoreductase</fullName>
    </alternativeName>
    <alternativeName>
        <fullName evidence="1">PreQ(0) reductase</fullName>
    </alternativeName>
</protein>